<sequence length="411" mass="46277">DSEFAELKIRGKIFKLPILKASIGEDVIDISRVSAEADCFTYDPGFMSTASCQSTITYIDGDKGILRHRGYDIKDLAEKSDFLEVAYLLIYGELPSGEQYNNFTKQVAHHSLVNERLHYLFQTFCSSSHPMAIMLAAVGSLSAFYPDLLNFKEADYELTAIRMIAKIPTIAAMSYKYSIGQPFIYPDNSLDFTENFLHMMFATPCTKYKVNPIIKNALNKIFILHADHEQNASTSTVRIAGSSGANPFACISTGIASLWGPAHGGANEVVINMLKEIGSSEYIPKYIAKAKDKNDPFRLMGFGHRIYKNYDPRAAVLKETCKEVLKELGQLDNNPLLQIAIELEAIALKDEYFIERKLYPNVDFYSGIIYKAMGIPSQMFTVLFAIARTVGWMAQWKEMHEDPEQKISRPR</sequence>
<comment type="catalytic activity">
    <reaction evidence="1">
        <text>oxaloacetate + acetyl-CoA + H2O = citrate + CoA + H(+)</text>
        <dbReference type="Rhea" id="RHEA:16845"/>
        <dbReference type="ChEBI" id="CHEBI:15377"/>
        <dbReference type="ChEBI" id="CHEBI:15378"/>
        <dbReference type="ChEBI" id="CHEBI:16452"/>
        <dbReference type="ChEBI" id="CHEBI:16947"/>
        <dbReference type="ChEBI" id="CHEBI:57287"/>
        <dbReference type="ChEBI" id="CHEBI:57288"/>
        <dbReference type="EC" id="2.3.3.16"/>
    </reaction>
</comment>
<comment type="pathway">
    <text>Carbohydrate metabolism; tricarboxylic acid cycle; isocitrate from oxaloacetate: step 1/2.</text>
</comment>
<comment type="miscellaneous">
    <text>Citrate synthase is found in nearly all cells capable of oxidative metabolism.</text>
</comment>
<comment type="similarity">
    <text evidence="2">Belongs to the citrate synthase family.</text>
</comment>
<protein>
    <recommendedName>
        <fullName>Citrate synthase</fullName>
        <ecNumber>2.3.3.16</ecNumber>
    </recommendedName>
</protein>
<name>CISY_RICMA</name>
<evidence type="ECO:0000255" key="1">
    <source>
        <dbReference type="PROSITE-ProRule" id="PRU10117"/>
    </source>
</evidence>
<evidence type="ECO:0000305" key="2"/>
<accession>Q59748</accession>
<reference key="1">
    <citation type="journal article" date="1997" name="Int. J. Syst. Bacteriol.">
        <title>Citrate synthase gene comparison, a new tool for phylogenetic analysis, and its application for the rickettsiae.</title>
        <authorList>
            <person name="Roux V."/>
            <person name="Rydkina E."/>
            <person name="Eremeeva M."/>
            <person name="Raoult D."/>
        </authorList>
    </citation>
    <scope>NUCLEOTIDE SEQUENCE [GENOMIC DNA]</scope>
    <source>
        <strain>Mtu1</strain>
    </source>
</reference>
<proteinExistence type="inferred from homology"/>
<feature type="chain" id="PRO_0000169965" description="Citrate synthase">
    <location>
        <begin position="1" status="less than"/>
        <end position="411" status="greater than"/>
    </location>
</feature>
<feature type="active site" evidence="1">
    <location>
        <position position="304"/>
    </location>
</feature>
<feature type="active site" evidence="1">
    <location>
        <position position="363"/>
    </location>
</feature>
<feature type="non-terminal residue">
    <location>
        <position position="1"/>
    </location>
</feature>
<feature type="non-terminal residue">
    <location>
        <position position="411"/>
    </location>
</feature>
<keyword id="KW-0808">Transferase</keyword>
<keyword id="KW-0816">Tricarboxylic acid cycle</keyword>
<gene>
    <name type="primary">gltA</name>
</gene>
<organism>
    <name type="scientific">Rickettsia massiliae</name>
    <dbReference type="NCBI Taxonomy" id="35791"/>
    <lineage>
        <taxon>Bacteria</taxon>
        <taxon>Pseudomonadati</taxon>
        <taxon>Pseudomonadota</taxon>
        <taxon>Alphaproteobacteria</taxon>
        <taxon>Rickettsiales</taxon>
        <taxon>Rickettsiaceae</taxon>
        <taxon>Rickettsieae</taxon>
        <taxon>Rickettsia</taxon>
        <taxon>spotted fever group</taxon>
    </lineage>
</organism>
<dbReference type="EC" id="2.3.3.16"/>
<dbReference type="EMBL" id="U59719">
    <property type="protein sequence ID" value="AAB02961.1"/>
    <property type="molecule type" value="Genomic_DNA"/>
</dbReference>
<dbReference type="SMR" id="Q59748"/>
<dbReference type="UniPathway" id="UPA00223">
    <property type="reaction ID" value="UER00717"/>
</dbReference>
<dbReference type="GO" id="GO:0005737">
    <property type="term" value="C:cytoplasm"/>
    <property type="evidence" value="ECO:0007669"/>
    <property type="project" value="InterPro"/>
</dbReference>
<dbReference type="GO" id="GO:0004108">
    <property type="term" value="F:citrate (Si)-synthase activity"/>
    <property type="evidence" value="ECO:0007669"/>
    <property type="project" value="InterPro"/>
</dbReference>
<dbReference type="GO" id="GO:0006099">
    <property type="term" value="P:tricarboxylic acid cycle"/>
    <property type="evidence" value="ECO:0007669"/>
    <property type="project" value="UniProtKB-UniPathway"/>
</dbReference>
<dbReference type="CDD" id="cd06114">
    <property type="entry name" value="EcCS_like"/>
    <property type="match status" value="1"/>
</dbReference>
<dbReference type="FunFam" id="1.10.230.10:FF:000002">
    <property type="entry name" value="Citrate synthase"/>
    <property type="match status" value="1"/>
</dbReference>
<dbReference type="Gene3D" id="2.20.28.60">
    <property type="match status" value="1"/>
</dbReference>
<dbReference type="Gene3D" id="1.10.580.10">
    <property type="entry name" value="Citrate Synthase, domain 1"/>
    <property type="match status" value="1"/>
</dbReference>
<dbReference type="Gene3D" id="1.10.230.10">
    <property type="entry name" value="Cytochrome P450-Terp, domain 2"/>
    <property type="match status" value="1"/>
</dbReference>
<dbReference type="InterPro" id="IPR016142">
    <property type="entry name" value="Citrate_synth-like_lrg_a-sub"/>
</dbReference>
<dbReference type="InterPro" id="IPR016143">
    <property type="entry name" value="Citrate_synth-like_sm_a-sub"/>
</dbReference>
<dbReference type="InterPro" id="IPR002020">
    <property type="entry name" value="Citrate_synthase"/>
</dbReference>
<dbReference type="InterPro" id="IPR019810">
    <property type="entry name" value="Citrate_synthase_AS"/>
</dbReference>
<dbReference type="InterPro" id="IPR024176">
    <property type="entry name" value="Citrate_synthase_bac-typ"/>
</dbReference>
<dbReference type="InterPro" id="IPR036969">
    <property type="entry name" value="Citrate_synthase_sf"/>
</dbReference>
<dbReference type="InterPro" id="IPR010953">
    <property type="entry name" value="Citrate_synthase_typ-I"/>
</dbReference>
<dbReference type="NCBIfam" id="TIGR01798">
    <property type="entry name" value="cit_synth_I"/>
    <property type="match status" value="1"/>
</dbReference>
<dbReference type="NCBIfam" id="NF004126">
    <property type="entry name" value="PRK05614.1"/>
    <property type="match status" value="1"/>
</dbReference>
<dbReference type="PANTHER" id="PTHR42871">
    <property type="entry name" value="CITRATE SYNTHASE"/>
    <property type="match status" value="1"/>
</dbReference>
<dbReference type="PANTHER" id="PTHR42871:SF1">
    <property type="entry name" value="CITRATE SYNTHASE"/>
    <property type="match status" value="1"/>
</dbReference>
<dbReference type="Pfam" id="PF00285">
    <property type="entry name" value="Citrate_synt"/>
    <property type="match status" value="1"/>
</dbReference>
<dbReference type="PIRSF" id="PIRSF001369">
    <property type="entry name" value="Citrate_synth"/>
    <property type="match status" value="1"/>
</dbReference>
<dbReference type="PRINTS" id="PR00143">
    <property type="entry name" value="CITRTSNTHASE"/>
</dbReference>
<dbReference type="SUPFAM" id="SSF48256">
    <property type="entry name" value="Citrate synthase"/>
    <property type="match status" value="1"/>
</dbReference>
<dbReference type="PROSITE" id="PS00480">
    <property type="entry name" value="CITRATE_SYNTHASE"/>
    <property type="match status" value="1"/>
</dbReference>